<comment type="function">
    <text evidence="1">Binds directly to 23S ribosomal RNA and is necessary for the in vitro assembly process of the 50S ribosomal subunit. It is not involved in the protein synthesizing functions of that subunit.</text>
</comment>
<comment type="similarity">
    <text evidence="1">Belongs to the bacterial ribosomal protein bL20 family.</text>
</comment>
<evidence type="ECO:0000255" key="1">
    <source>
        <dbReference type="HAMAP-Rule" id="MF_00382"/>
    </source>
</evidence>
<evidence type="ECO:0000305" key="2"/>
<sequence length="120" mass="14128">MPRSVNAVASKKHRKKILNFAKGFYGARSKLYTVAKNAVEKSFKYSYFGRKNKKRNFRKLWIKRINAAARENGISYSNLIFLIRKNNIKLNRKCLADLAMKNNSSFKKMIKKFQILYLDL</sequence>
<accession>A8Z5V8</accession>
<feature type="chain" id="PRO_1000080102" description="Large ribosomal subunit protein bL20">
    <location>
        <begin position="1"/>
        <end position="120"/>
    </location>
</feature>
<reference key="1">
    <citation type="journal article" date="2007" name="Proc. Natl. Acad. Sci. U.S.A.">
        <title>Parallel genomic evolution and metabolic interdependence in an ancient symbiosis.</title>
        <authorList>
            <person name="McCutcheon J.P."/>
            <person name="Moran N.A."/>
        </authorList>
    </citation>
    <scope>NUCLEOTIDE SEQUENCE [LARGE SCALE GENOMIC DNA]</scope>
    <source>
        <strain>GWSS</strain>
    </source>
</reference>
<gene>
    <name evidence="1" type="primary">rplT</name>
    <name type="ordered locus">SMGWSS_094</name>
</gene>
<keyword id="KW-0687">Ribonucleoprotein</keyword>
<keyword id="KW-0689">Ribosomal protein</keyword>
<keyword id="KW-0694">RNA-binding</keyword>
<keyword id="KW-0699">rRNA-binding</keyword>
<name>RL20_KARMG</name>
<proteinExistence type="inferred from homology"/>
<dbReference type="EMBL" id="CP000770">
    <property type="protein sequence ID" value="ABS30509.1"/>
    <property type="molecule type" value="Genomic_DNA"/>
</dbReference>
<dbReference type="SMR" id="A8Z5V8"/>
<dbReference type="STRING" id="444179.SMGWSS_094"/>
<dbReference type="KEGG" id="smg:SMGWSS_094"/>
<dbReference type="HOGENOM" id="CLU_123265_0_1_10"/>
<dbReference type="Proteomes" id="UP000000781">
    <property type="component" value="Chromosome"/>
</dbReference>
<dbReference type="GO" id="GO:1990904">
    <property type="term" value="C:ribonucleoprotein complex"/>
    <property type="evidence" value="ECO:0007669"/>
    <property type="project" value="UniProtKB-KW"/>
</dbReference>
<dbReference type="GO" id="GO:0005840">
    <property type="term" value="C:ribosome"/>
    <property type="evidence" value="ECO:0007669"/>
    <property type="project" value="UniProtKB-KW"/>
</dbReference>
<dbReference type="GO" id="GO:0019843">
    <property type="term" value="F:rRNA binding"/>
    <property type="evidence" value="ECO:0007669"/>
    <property type="project" value="UniProtKB-UniRule"/>
</dbReference>
<dbReference type="GO" id="GO:0003735">
    <property type="term" value="F:structural constituent of ribosome"/>
    <property type="evidence" value="ECO:0007669"/>
    <property type="project" value="InterPro"/>
</dbReference>
<dbReference type="GO" id="GO:0000027">
    <property type="term" value="P:ribosomal large subunit assembly"/>
    <property type="evidence" value="ECO:0007669"/>
    <property type="project" value="UniProtKB-UniRule"/>
</dbReference>
<dbReference type="GO" id="GO:0006412">
    <property type="term" value="P:translation"/>
    <property type="evidence" value="ECO:0007669"/>
    <property type="project" value="InterPro"/>
</dbReference>
<dbReference type="CDD" id="cd07026">
    <property type="entry name" value="Ribosomal_L20"/>
    <property type="match status" value="1"/>
</dbReference>
<dbReference type="FunFam" id="1.10.1900.20:FF:000001">
    <property type="entry name" value="50S ribosomal protein L20"/>
    <property type="match status" value="1"/>
</dbReference>
<dbReference type="Gene3D" id="6.10.160.10">
    <property type="match status" value="1"/>
</dbReference>
<dbReference type="Gene3D" id="1.10.1900.20">
    <property type="entry name" value="Ribosomal protein L20"/>
    <property type="match status" value="1"/>
</dbReference>
<dbReference type="HAMAP" id="MF_00382">
    <property type="entry name" value="Ribosomal_bL20"/>
    <property type="match status" value="1"/>
</dbReference>
<dbReference type="InterPro" id="IPR005813">
    <property type="entry name" value="Ribosomal_bL20"/>
</dbReference>
<dbReference type="InterPro" id="IPR035566">
    <property type="entry name" value="Ribosomal_protein_bL20_C"/>
</dbReference>
<dbReference type="NCBIfam" id="TIGR01032">
    <property type="entry name" value="rplT_bact"/>
    <property type="match status" value="1"/>
</dbReference>
<dbReference type="PANTHER" id="PTHR10986">
    <property type="entry name" value="39S RIBOSOMAL PROTEIN L20"/>
    <property type="match status" value="1"/>
</dbReference>
<dbReference type="Pfam" id="PF00453">
    <property type="entry name" value="Ribosomal_L20"/>
    <property type="match status" value="1"/>
</dbReference>
<dbReference type="PRINTS" id="PR00062">
    <property type="entry name" value="RIBOSOMALL20"/>
</dbReference>
<dbReference type="SUPFAM" id="SSF74731">
    <property type="entry name" value="Ribosomal protein L20"/>
    <property type="match status" value="1"/>
</dbReference>
<organism>
    <name type="scientific">Karelsulcia muelleri (strain GWSS)</name>
    <name type="common">Sulcia muelleri</name>
    <dbReference type="NCBI Taxonomy" id="444179"/>
    <lineage>
        <taxon>Bacteria</taxon>
        <taxon>Pseudomonadati</taxon>
        <taxon>Bacteroidota</taxon>
        <taxon>Flavobacteriia</taxon>
        <taxon>Flavobacteriales</taxon>
        <taxon>Candidatus Karelsulcia</taxon>
    </lineage>
</organism>
<protein>
    <recommendedName>
        <fullName evidence="1">Large ribosomal subunit protein bL20</fullName>
    </recommendedName>
    <alternativeName>
        <fullName evidence="2">50S ribosomal protein L20</fullName>
    </alternativeName>
</protein>